<comment type="function">
    <text evidence="1">NDH-1 shuttles electrons from NADH, via FMN and iron-sulfur (Fe-S) centers, to quinones in the respiratory chain. Couples the redox reaction to proton translocation (for every two electrons transferred, four hydrogen ions are translocated across the cytoplasmic membrane), and thus conserves the redox energy in a proton gradient (By similarity).</text>
</comment>
<comment type="catalytic activity">
    <reaction>
        <text>a quinone + NADH + 5 H(+)(in) = a quinol + NAD(+) + 4 H(+)(out)</text>
        <dbReference type="Rhea" id="RHEA:57888"/>
        <dbReference type="ChEBI" id="CHEBI:15378"/>
        <dbReference type="ChEBI" id="CHEBI:24646"/>
        <dbReference type="ChEBI" id="CHEBI:57540"/>
        <dbReference type="ChEBI" id="CHEBI:57945"/>
        <dbReference type="ChEBI" id="CHEBI:132124"/>
    </reaction>
</comment>
<comment type="cofactor">
    <cofactor evidence="1">
        <name>[2Fe-2S] cluster</name>
        <dbReference type="ChEBI" id="CHEBI:190135"/>
    </cofactor>
    <text evidence="1">Binds 1 [2Fe-2S] cluster per subunit.</text>
</comment>
<comment type="cofactor">
    <cofactor evidence="1">
        <name>[4Fe-4S] cluster</name>
        <dbReference type="ChEBI" id="CHEBI:49883"/>
    </cofactor>
    <text evidence="1">Binds 2 [4Fe-4S] clusters per subunit.</text>
</comment>
<comment type="similarity">
    <text evidence="5">Belongs to the complex I 75 kDa subunit family.</text>
</comment>
<keyword id="KW-0001">2Fe-2S</keyword>
<keyword id="KW-0004">4Fe-4S</keyword>
<keyword id="KW-0408">Iron</keyword>
<keyword id="KW-0411">Iron-sulfur</keyword>
<keyword id="KW-0479">Metal-binding</keyword>
<keyword id="KW-0520">NAD</keyword>
<keyword id="KW-0874">Quinone</keyword>
<keyword id="KW-1278">Translocase</keyword>
<reference key="1">
    <citation type="journal article" date="2005" name="PLoS Biol.">
        <title>The genome sequence of Rickettsia felis identifies the first putative conjugative plasmid in an obligate intracellular parasite.</title>
        <authorList>
            <person name="Ogata H."/>
            <person name="Renesto P."/>
            <person name="Audic S."/>
            <person name="Robert C."/>
            <person name="Blanc G."/>
            <person name="Fournier P.-E."/>
            <person name="Parinello H."/>
            <person name="Claverie J.-M."/>
            <person name="Raoult D."/>
        </authorList>
    </citation>
    <scope>NUCLEOTIDE SEQUENCE [LARGE SCALE GENOMIC DNA]</scope>
    <source>
        <strain>ATCC VR-1525 / URRWXCal2</strain>
    </source>
</reference>
<sequence length="671" mass="74861">MIKLNIDGSEIEVSEGSTVYQACTQAGKEIPHFCYHERLKIAGNCRMCLVEMEKSPKPIASCAMPVSNGMVIHTDTPMVKKAREGVMEFLLINHPLDCPICDQGGECDLQDQAFRYGKGTNRFHENKRSIKDKYMGPLIKTAMTRCIQCTRCIRFANDIAGIEEMGAIHRGEHMEVTSYLEQTLDSEMSGNMIDICPVGALNSKPYAFKARKWELKHTASIGVHDAEGSNIRIDSRGDEVMRILPRVNEEINEEWLSDKNRFSYDGLKYQRLDLPYIRKNGKLVEASWSEALKTIADKIKSVKPEKIAAIAGSLVSVEAMFMLKTLLQKLGSNNYSVNQFDYKFDTTQRGNYLFNTTIAGVEKADLCLLIGANLRQIAPVLNSRIGQRVRAGSLKVARIGEGHNQTYRIQDLGSDIKIIEELAIGTHEFTKALKAAKYPMIIVGDGVYARDDGYAILSLIHKIVAEYNIMRDDFQGFNMLHNHASIVGGLDIGFNTPIKLEELELTYLLGADELPFDKLKSAFIIYQGHHGDSGAANADVILPAAAYTEQSGIYVNLEGRPQIAEKAVAPVGVAKEDIEIIKELAGSLKIDIGMDNLQEVRVRLAKEYKIFANIDKIVESKFAKFSFKDKLSKEPITMGPINYYMTDVISKNSVTMAKCVEAKEKRNERAA</sequence>
<protein>
    <recommendedName>
        <fullName>NADH-quinone oxidoreductase subunit G</fullName>
        <ecNumber>7.1.1.-</ecNumber>
    </recommendedName>
    <alternativeName>
        <fullName>NADH dehydrogenase I subunit G</fullName>
    </alternativeName>
    <alternativeName>
        <fullName>NDH-1 subunit G</fullName>
    </alternativeName>
</protein>
<proteinExistence type="inferred from homology"/>
<gene>
    <name type="primary">nuoG</name>
    <name type="ordered locus">RF_1262</name>
</gene>
<evidence type="ECO:0000250" key="1"/>
<evidence type="ECO:0000255" key="2">
    <source>
        <dbReference type="PROSITE-ProRule" id="PRU00465"/>
    </source>
</evidence>
<evidence type="ECO:0000255" key="3">
    <source>
        <dbReference type="PROSITE-ProRule" id="PRU01004"/>
    </source>
</evidence>
<evidence type="ECO:0000255" key="4">
    <source>
        <dbReference type="PROSITE-ProRule" id="PRU01184"/>
    </source>
</evidence>
<evidence type="ECO:0000305" key="5"/>
<name>NUOG_RICFE</name>
<feature type="chain" id="PRO_0000287843" description="NADH-quinone oxidoreductase subunit G">
    <location>
        <begin position="1"/>
        <end position="671"/>
    </location>
</feature>
<feature type="domain" description="2Fe-2S ferredoxin-type" evidence="2">
    <location>
        <begin position="1"/>
        <end position="78"/>
    </location>
</feature>
<feature type="domain" description="4Fe-4S His(Cys)3-ligated-type" evidence="4">
    <location>
        <begin position="78"/>
        <end position="117"/>
    </location>
</feature>
<feature type="domain" description="4Fe-4S Mo/W bis-MGD-type" evidence="3">
    <location>
        <begin position="215"/>
        <end position="271"/>
    </location>
</feature>
<feature type="binding site" evidence="1">
    <location>
        <position position="34"/>
    </location>
    <ligand>
        <name>[2Fe-2S] cluster</name>
        <dbReference type="ChEBI" id="CHEBI:190135"/>
    </ligand>
</feature>
<feature type="binding site" evidence="1">
    <location>
        <position position="45"/>
    </location>
    <ligand>
        <name>[2Fe-2S] cluster</name>
        <dbReference type="ChEBI" id="CHEBI:190135"/>
    </ligand>
</feature>
<feature type="binding site" evidence="1">
    <location>
        <position position="48"/>
    </location>
    <ligand>
        <name>[2Fe-2S] cluster</name>
        <dbReference type="ChEBI" id="CHEBI:190135"/>
    </ligand>
</feature>
<feature type="binding site" evidence="1">
    <location>
        <position position="62"/>
    </location>
    <ligand>
        <name>[2Fe-2S] cluster</name>
        <dbReference type="ChEBI" id="CHEBI:190135"/>
    </ligand>
</feature>
<feature type="binding site" evidence="4">
    <location>
        <position position="94"/>
    </location>
    <ligand>
        <name>[4Fe-4S] cluster</name>
        <dbReference type="ChEBI" id="CHEBI:49883"/>
        <label>1</label>
    </ligand>
</feature>
<feature type="binding site" evidence="4">
    <location>
        <position position="98"/>
    </location>
    <ligand>
        <name>[4Fe-4S] cluster</name>
        <dbReference type="ChEBI" id="CHEBI:49883"/>
        <label>1</label>
    </ligand>
</feature>
<feature type="binding site" evidence="4">
    <location>
        <position position="101"/>
    </location>
    <ligand>
        <name>[4Fe-4S] cluster</name>
        <dbReference type="ChEBI" id="CHEBI:49883"/>
        <label>1</label>
    </ligand>
</feature>
<feature type="binding site" evidence="4">
    <location>
        <position position="107"/>
    </location>
    <ligand>
        <name>[4Fe-4S] cluster</name>
        <dbReference type="ChEBI" id="CHEBI:49883"/>
        <label>1</label>
    </ligand>
</feature>
<feature type="binding site" evidence="1">
    <location>
        <position position="146"/>
    </location>
    <ligand>
        <name>[4Fe-4S] cluster</name>
        <dbReference type="ChEBI" id="CHEBI:49883"/>
        <label>2</label>
    </ligand>
</feature>
<feature type="binding site" evidence="1">
    <location>
        <position position="149"/>
    </location>
    <ligand>
        <name>[4Fe-4S] cluster</name>
        <dbReference type="ChEBI" id="CHEBI:49883"/>
        <label>2</label>
    </ligand>
</feature>
<feature type="binding site" evidence="1">
    <location>
        <position position="152"/>
    </location>
    <ligand>
        <name>[4Fe-4S] cluster</name>
        <dbReference type="ChEBI" id="CHEBI:49883"/>
        <label>2</label>
    </ligand>
</feature>
<feature type="binding site" evidence="1">
    <location>
        <position position="196"/>
    </location>
    <ligand>
        <name>[4Fe-4S] cluster</name>
        <dbReference type="ChEBI" id="CHEBI:49883"/>
        <label>2</label>
    </ligand>
</feature>
<dbReference type="EC" id="7.1.1.-"/>
<dbReference type="EMBL" id="CP000053">
    <property type="protein sequence ID" value="AAY62113.1"/>
    <property type="molecule type" value="Genomic_DNA"/>
</dbReference>
<dbReference type="SMR" id="Q4UK22"/>
<dbReference type="STRING" id="315456.RF_1262"/>
<dbReference type="KEGG" id="rfe:RF_1262"/>
<dbReference type="eggNOG" id="COG1034">
    <property type="taxonomic scope" value="Bacteria"/>
</dbReference>
<dbReference type="HOGENOM" id="CLU_000422_11_6_5"/>
<dbReference type="OrthoDB" id="9803192at2"/>
<dbReference type="Proteomes" id="UP000008548">
    <property type="component" value="Chromosome"/>
</dbReference>
<dbReference type="GO" id="GO:0016020">
    <property type="term" value="C:membrane"/>
    <property type="evidence" value="ECO:0007669"/>
    <property type="project" value="InterPro"/>
</dbReference>
<dbReference type="GO" id="GO:0051537">
    <property type="term" value="F:2 iron, 2 sulfur cluster binding"/>
    <property type="evidence" value="ECO:0007669"/>
    <property type="project" value="UniProtKB-KW"/>
</dbReference>
<dbReference type="GO" id="GO:0051539">
    <property type="term" value="F:4 iron, 4 sulfur cluster binding"/>
    <property type="evidence" value="ECO:0007669"/>
    <property type="project" value="UniProtKB-KW"/>
</dbReference>
<dbReference type="GO" id="GO:0046872">
    <property type="term" value="F:metal ion binding"/>
    <property type="evidence" value="ECO:0007669"/>
    <property type="project" value="UniProtKB-KW"/>
</dbReference>
<dbReference type="GO" id="GO:0008137">
    <property type="term" value="F:NADH dehydrogenase (ubiquinone) activity"/>
    <property type="evidence" value="ECO:0007669"/>
    <property type="project" value="InterPro"/>
</dbReference>
<dbReference type="GO" id="GO:0048038">
    <property type="term" value="F:quinone binding"/>
    <property type="evidence" value="ECO:0007669"/>
    <property type="project" value="UniProtKB-KW"/>
</dbReference>
<dbReference type="GO" id="GO:0042773">
    <property type="term" value="P:ATP synthesis coupled electron transport"/>
    <property type="evidence" value="ECO:0007669"/>
    <property type="project" value="InterPro"/>
</dbReference>
<dbReference type="CDD" id="cd00207">
    <property type="entry name" value="fer2"/>
    <property type="match status" value="1"/>
</dbReference>
<dbReference type="CDD" id="cd02773">
    <property type="entry name" value="MopB_Res-Cmplx1_Nad11"/>
    <property type="match status" value="1"/>
</dbReference>
<dbReference type="FunFam" id="3.10.20.740:FF:000001">
    <property type="entry name" value="NADH-quinone oxidoreductase subunit G"/>
    <property type="match status" value="1"/>
</dbReference>
<dbReference type="FunFam" id="3.30.70.20:FF:000002">
    <property type="entry name" value="NADH-ubiquinone oxidoreductase 75 kDa subunit"/>
    <property type="match status" value="1"/>
</dbReference>
<dbReference type="Gene3D" id="3.10.20.740">
    <property type="match status" value="1"/>
</dbReference>
<dbReference type="Gene3D" id="3.30.70.20">
    <property type="match status" value="1"/>
</dbReference>
<dbReference type="Gene3D" id="3.40.50.740">
    <property type="match status" value="2"/>
</dbReference>
<dbReference type="Gene3D" id="3.40.228.10">
    <property type="entry name" value="Dimethylsulfoxide Reductase, domain 2"/>
    <property type="match status" value="1"/>
</dbReference>
<dbReference type="InterPro" id="IPR036010">
    <property type="entry name" value="2Fe-2S_ferredoxin-like_sf"/>
</dbReference>
<dbReference type="InterPro" id="IPR001041">
    <property type="entry name" value="2Fe-2S_ferredoxin-type"/>
</dbReference>
<dbReference type="InterPro" id="IPR006656">
    <property type="entry name" value="Mopterin_OxRdtase"/>
</dbReference>
<dbReference type="InterPro" id="IPR006963">
    <property type="entry name" value="Mopterin_OxRdtase_4Fe-4S_dom"/>
</dbReference>
<dbReference type="InterPro" id="IPR000283">
    <property type="entry name" value="NADH_UbQ_OxRdtase_75kDa_su_CS"/>
</dbReference>
<dbReference type="InterPro" id="IPR054351">
    <property type="entry name" value="NADH_UbQ_OxRdtase_ferredoxin"/>
</dbReference>
<dbReference type="InterPro" id="IPR010228">
    <property type="entry name" value="NADH_UbQ_OxRdtase_Gsu"/>
</dbReference>
<dbReference type="InterPro" id="IPR019574">
    <property type="entry name" value="NADH_UbQ_OxRdtase_Gsu_4Fe4S-bd"/>
</dbReference>
<dbReference type="InterPro" id="IPR015405">
    <property type="entry name" value="NDUFS1-like_C"/>
</dbReference>
<dbReference type="InterPro" id="IPR050123">
    <property type="entry name" value="Prok_molybdopt-oxidoreductase"/>
</dbReference>
<dbReference type="NCBIfam" id="TIGR01973">
    <property type="entry name" value="NuoG"/>
    <property type="match status" value="1"/>
</dbReference>
<dbReference type="PANTHER" id="PTHR43105:SF13">
    <property type="entry name" value="NADH-UBIQUINONE OXIDOREDUCTASE 75 KDA SUBUNIT, MITOCHONDRIAL"/>
    <property type="match status" value="1"/>
</dbReference>
<dbReference type="PANTHER" id="PTHR43105">
    <property type="entry name" value="RESPIRATORY NITRATE REDUCTASE"/>
    <property type="match status" value="1"/>
</dbReference>
<dbReference type="Pfam" id="PF13510">
    <property type="entry name" value="Fer2_4"/>
    <property type="match status" value="1"/>
</dbReference>
<dbReference type="Pfam" id="PF22151">
    <property type="entry name" value="Fer4_NDSU1"/>
    <property type="match status" value="1"/>
</dbReference>
<dbReference type="Pfam" id="PF22117">
    <property type="entry name" value="Fer4_Nqo3"/>
    <property type="match status" value="1"/>
</dbReference>
<dbReference type="Pfam" id="PF00384">
    <property type="entry name" value="Molybdopterin"/>
    <property type="match status" value="1"/>
</dbReference>
<dbReference type="Pfam" id="PF10588">
    <property type="entry name" value="NADH-G_4Fe-4S_3"/>
    <property type="match status" value="1"/>
</dbReference>
<dbReference type="Pfam" id="PF09326">
    <property type="entry name" value="NADH_dhqG_C"/>
    <property type="match status" value="1"/>
</dbReference>
<dbReference type="SMART" id="SM00929">
    <property type="entry name" value="NADH-G_4Fe-4S_3"/>
    <property type="match status" value="1"/>
</dbReference>
<dbReference type="SUPFAM" id="SSF54292">
    <property type="entry name" value="2Fe-2S ferredoxin-like"/>
    <property type="match status" value="1"/>
</dbReference>
<dbReference type="SUPFAM" id="SSF54862">
    <property type="entry name" value="4Fe-4S ferredoxins"/>
    <property type="match status" value="1"/>
</dbReference>
<dbReference type="SUPFAM" id="SSF53706">
    <property type="entry name" value="Formate dehydrogenase/DMSO reductase, domains 1-3"/>
    <property type="match status" value="1"/>
</dbReference>
<dbReference type="PROSITE" id="PS51085">
    <property type="entry name" value="2FE2S_FER_2"/>
    <property type="match status" value="1"/>
</dbReference>
<dbReference type="PROSITE" id="PS51839">
    <property type="entry name" value="4FE4S_HC3"/>
    <property type="match status" value="1"/>
</dbReference>
<dbReference type="PROSITE" id="PS51669">
    <property type="entry name" value="4FE4S_MOW_BIS_MGD"/>
    <property type="match status" value="1"/>
</dbReference>
<dbReference type="PROSITE" id="PS00641">
    <property type="entry name" value="COMPLEX1_75K_1"/>
    <property type="match status" value="1"/>
</dbReference>
<dbReference type="PROSITE" id="PS00642">
    <property type="entry name" value="COMPLEX1_75K_2"/>
    <property type="match status" value="1"/>
</dbReference>
<dbReference type="PROSITE" id="PS00643">
    <property type="entry name" value="COMPLEX1_75K_3"/>
    <property type="match status" value="1"/>
</dbReference>
<accession>Q4UK22</accession>
<organism>
    <name type="scientific">Rickettsia felis (strain ATCC VR-1525 / URRWXCal2)</name>
    <name type="common">Rickettsia azadi</name>
    <dbReference type="NCBI Taxonomy" id="315456"/>
    <lineage>
        <taxon>Bacteria</taxon>
        <taxon>Pseudomonadati</taxon>
        <taxon>Pseudomonadota</taxon>
        <taxon>Alphaproteobacteria</taxon>
        <taxon>Rickettsiales</taxon>
        <taxon>Rickettsiaceae</taxon>
        <taxon>Rickettsieae</taxon>
        <taxon>Rickettsia</taxon>
        <taxon>spotted fever group</taxon>
    </lineage>
</organism>